<name>ATPD_NITHX</name>
<protein>
    <recommendedName>
        <fullName evidence="1">ATP synthase subunit delta</fullName>
    </recommendedName>
    <alternativeName>
        <fullName evidence="1">ATP synthase F(1) sector subunit delta</fullName>
    </alternativeName>
    <alternativeName>
        <fullName evidence="1">F-type ATPase subunit delta</fullName>
        <shortName evidence="1">F-ATPase subunit delta</shortName>
    </alternativeName>
</protein>
<evidence type="ECO:0000255" key="1">
    <source>
        <dbReference type="HAMAP-Rule" id="MF_01416"/>
    </source>
</evidence>
<evidence type="ECO:0000305" key="2"/>
<proteinExistence type="inferred from homology"/>
<accession>Q1QQS4</accession>
<reference key="1">
    <citation type="submission" date="2006-03" db="EMBL/GenBank/DDBJ databases">
        <title>Complete sequence of chromosome of Nitrobacter hamburgensis X14.</title>
        <authorList>
            <consortium name="US DOE Joint Genome Institute"/>
            <person name="Copeland A."/>
            <person name="Lucas S."/>
            <person name="Lapidus A."/>
            <person name="Barry K."/>
            <person name="Detter J.C."/>
            <person name="Glavina del Rio T."/>
            <person name="Hammon N."/>
            <person name="Israni S."/>
            <person name="Dalin E."/>
            <person name="Tice H."/>
            <person name="Pitluck S."/>
            <person name="Chain P."/>
            <person name="Malfatti S."/>
            <person name="Shin M."/>
            <person name="Vergez L."/>
            <person name="Schmutz J."/>
            <person name="Larimer F."/>
            <person name="Land M."/>
            <person name="Hauser L."/>
            <person name="Kyrpides N."/>
            <person name="Ivanova N."/>
            <person name="Ward B."/>
            <person name="Arp D."/>
            <person name="Klotz M."/>
            <person name="Stein L."/>
            <person name="O'Mullan G."/>
            <person name="Starkenburg S."/>
            <person name="Sayavedra L."/>
            <person name="Poret-Peterson A.T."/>
            <person name="Gentry M.E."/>
            <person name="Bruce D."/>
            <person name="Richardson P."/>
        </authorList>
    </citation>
    <scope>NUCLEOTIDE SEQUENCE [LARGE SCALE GENOMIC DNA]</scope>
    <source>
        <strain>DSM 10229 / NCIMB 13809 / X14</strain>
    </source>
</reference>
<sequence>MAAVDSSVSGVSGRYATALFELAREDKSIDAVKADLDRFDAMLADSPELARLVRSPVFSADTQAKALAAVLDKAGFGGTTAKFLKVLTANRRLFAVTEVIRAFRALVARFKGEVTAEVTVAETLNKKNLDALTTALKSVTGKDITLNVKVDPSIIGGLVVKLGSRMVDSSLRTKLNSIKHAMKEAG</sequence>
<gene>
    <name evidence="1" type="primary">atpH</name>
    <name type="ordered locus">Nham_0533</name>
</gene>
<organism>
    <name type="scientific">Nitrobacter hamburgensis (strain DSM 10229 / NCIMB 13809 / X14)</name>
    <dbReference type="NCBI Taxonomy" id="323097"/>
    <lineage>
        <taxon>Bacteria</taxon>
        <taxon>Pseudomonadati</taxon>
        <taxon>Pseudomonadota</taxon>
        <taxon>Alphaproteobacteria</taxon>
        <taxon>Hyphomicrobiales</taxon>
        <taxon>Nitrobacteraceae</taxon>
        <taxon>Nitrobacter</taxon>
    </lineage>
</organism>
<comment type="function">
    <text evidence="1">F(1)F(0) ATP synthase produces ATP from ADP in the presence of a proton or sodium gradient. F-type ATPases consist of two structural domains, F(1) containing the extramembraneous catalytic core and F(0) containing the membrane proton channel, linked together by a central stalk and a peripheral stalk. During catalysis, ATP synthesis in the catalytic domain of F(1) is coupled via a rotary mechanism of the central stalk subunits to proton translocation.</text>
</comment>
<comment type="function">
    <text evidence="1">This protein is part of the stalk that links CF(0) to CF(1). It either transmits conformational changes from CF(0) to CF(1) or is implicated in proton conduction.</text>
</comment>
<comment type="subunit">
    <text evidence="1">F-type ATPases have 2 components, F(1) - the catalytic core - and F(0) - the membrane proton channel. F(1) has five subunits: alpha(3), beta(3), gamma(1), delta(1), epsilon(1). F(0) has three main subunits: a(1), b(2) and c(10-14). The alpha and beta chains form an alternating ring which encloses part of the gamma chain. F(1) is attached to F(0) by a central stalk formed by the gamma and epsilon chains, while a peripheral stalk is formed by the delta and b chains.</text>
</comment>
<comment type="subcellular location">
    <subcellularLocation>
        <location evidence="1">Cell inner membrane</location>
        <topology evidence="1">Peripheral membrane protein</topology>
    </subcellularLocation>
</comment>
<comment type="similarity">
    <text evidence="1">Belongs to the ATPase delta chain family.</text>
</comment>
<comment type="sequence caution" evidence="2">
    <conflict type="erroneous initiation">
        <sequence resource="EMBL-CDS" id="ABE61423"/>
    </conflict>
</comment>
<dbReference type="EMBL" id="CP000319">
    <property type="protein sequence ID" value="ABE61423.1"/>
    <property type="status" value="ALT_INIT"/>
    <property type="molecule type" value="Genomic_DNA"/>
</dbReference>
<dbReference type="RefSeq" id="WP_011509127.1">
    <property type="nucleotide sequence ID" value="NC_007964.1"/>
</dbReference>
<dbReference type="SMR" id="Q1QQS4"/>
<dbReference type="STRING" id="323097.Nham_0533"/>
<dbReference type="KEGG" id="nha:Nham_0533"/>
<dbReference type="eggNOG" id="COG0712">
    <property type="taxonomic scope" value="Bacteria"/>
</dbReference>
<dbReference type="HOGENOM" id="CLU_085114_0_1_5"/>
<dbReference type="OrthoDB" id="9796185at2"/>
<dbReference type="Proteomes" id="UP000001953">
    <property type="component" value="Chromosome"/>
</dbReference>
<dbReference type="GO" id="GO:0005886">
    <property type="term" value="C:plasma membrane"/>
    <property type="evidence" value="ECO:0007669"/>
    <property type="project" value="UniProtKB-SubCell"/>
</dbReference>
<dbReference type="GO" id="GO:0045259">
    <property type="term" value="C:proton-transporting ATP synthase complex"/>
    <property type="evidence" value="ECO:0007669"/>
    <property type="project" value="UniProtKB-KW"/>
</dbReference>
<dbReference type="GO" id="GO:0046933">
    <property type="term" value="F:proton-transporting ATP synthase activity, rotational mechanism"/>
    <property type="evidence" value="ECO:0007669"/>
    <property type="project" value="UniProtKB-UniRule"/>
</dbReference>
<dbReference type="Gene3D" id="1.10.520.20">
    <property type="entry name" value="N-terminal domain of the delta subunit of the F1F0-ATP synthase"/>
    <property type="match status" value="1"/>
</dbReference>
<dbReference type="HAMAP" id="MF_01416">
    <property type="entry name" value="ATP_synth_delta_bact"/>
    <property type="match status" value="1"/>
</dbReference>
<dbReference type="InterPro" id="IPR026015">
    <property type="entry name" value="ATP_synth_OSCP/delta_N_sf"/>
</dbReference>
<dbReference type="InterPro" id="IPR020781">
    <property type="entry name" value="ATPase_OSCP/d_CS"/>
</dbReference>
<dbReference type="InterPro" id="IPR000711">
    <property type="entry name" value="ATPase_OSCP/dsu"/>
</dbReference>
<dbReference type="NCBIfam" id="TIGR01145">
    <property type="entry name" value="ATP_synt_delta"/>
    <property type="match status" value="1"/>
</dbReference>
<dbReference type="NCBIfam" id="NF004406">
    <property type="entry name" value="PRK05758.3-2"/>
    <property type="match status" value="1"/>
</dbReference>
<dbReference type="PANTHER" id="PTHR11910">
    <property type="entry name" value="ATP SYNTHASE DELTA CHAIN"/>
    <property type="match status" value="1"/>
</dbReference>
<dbReference type="Pfam" id="PF00213">
    <property type="entry name" value="OSCP"/>
    <property type="match status" value="1"/>
</dbReference>
<dbReference type="PRINTS" id="PR00125">
    <property type="entry name" value="ATPASEDELTA"/>
</dbReference>
<dbReference type="SUPFAM" id="SSF47928">
    <property type="entry name" value="N-terminal domain of the delta subunit of the F1F0-ATP synthase"/>
    <property type="match status" value="1"/>
</dbReference>
<dbReference type="PROSITE" id="PS00389">
    <property type="entry name" value="ATPASE_DELTA"/>
    <property type="match status" value="1"/>
</dbReference>
<keyword id="KW-0066">ATP synthesis</keyword>
<keyword id="KW-0997">Cell inner membrane</keyword>
<keyword id="KW-1003">Cell membrane</keyword>
<keyword id="KW-0139">CF(1)</keyword>
<keyword id="KW-0375">Hydrogen ion transport</keyword>
<keyword id="KW-0406">Ion transport</keyword>
<keyword id="KW-0472">Membrane</keyword>
<keyword id="KW-1185">Reference proteome</keyword>
<keyword id="KW-0813">Transport</keyword>
<feature type="chain" id="PRO_0000371037" description="ATP synthase subunit delta">
    <location>
        <begin position="1"/>
        <end position="186"/>
    </location>
</feature>